<comment type="function">
    <text evidence="1">DNA-dependent RNA polymerase catalyzes the transcription of DNA into RNA using the four ribonucleoside triphosphates as substrates.</text>
</comment>
<comment type="catalytic activity">
    <reaction evidence="1">
        <text>RNA(n) + a ribonucleoside 5'-triphosphate = RNA(n+1) + diphosphate</text>
        <dbReference type="Rhea" id="RHEA:21248"/>
        <dbReference type="Rhea" id="RHEA-COMP:14527"/>
        <dbReference type="Rhea" id="RHEA-COMP:17342"/>
        <dbReference type="ChEBI" id="CHEBI:33019"/>
        <dbReference type="ChEBI" id="CHEBI:61557"/>
        <dbReference type="ChEBI" id="CHEBI:140395"/>
        <dbReference type="EC" id="2.7.7.6"/>
    </reaction>
</comment>
<comment type="subunit">
    <text evidence="1">The RNAP catalytic core consists of 2 alpha, 1 beta, 1 beta' and 1 omega subunit. When a sigma factor is associated with the core the holoenzyme is formed, which can initiate transcription.</text>
</comment>
<comment type="similarity">
    <text evidence="1">Belongs to the RNA polymerase beta chain family.</text>
</comment>
<keyword id="KW-0240">DNA-directed RNA polymerase</keyword>
<keyword id="KW-0548">Nucleotidyltransferase</keyword>
<keyword id="KW-1185">Reference proteome</keyword>
<keyword id="KW-0804">Transcription</keyword>
<keyword id="KW-0808">Transferase</keyword>
<gene>
    <name evidence="1" type="primary">rpoB</name>
    <name type="ordered locus">NGR_c11830</name>
</gene>
<organism>
    <name type="scientific">Sinorhizobium fredii (strain NBRC 101917 / NGR234)</name>
    <dbReference type="NCBI Taxonomy" id="394"/>
    <lineage>
        <taxon>Bacteria</taxon>
        <taxon>Pseudomonadati</taxon>
        <taxon>Pseudomonadota</taxon>
        <taxon>Alphaproteobacteria</taxon>
        <taxon>Hyphomicrobiales</taxon>
        <taxon>Rhizobiaceae</taxon>
        <taxon>Sinorhizobium/Ensifer group</taxon>
        <taxon>Sinorhizobium</taxon>
    </lineage>
</organism>
<dbReference type="EC" id="2.7.7.6" evidence="1"/>
<dbReference type="EMBL" id="CP001389">
    <property type="protein sequence ID" value="ACP24965.1"/>
    <property type="molecule type" value="Genomic_DNA"/>
</dbReference>
<dbReference type="RefSeq" id="WP_012707748.1">
    <property type="nucleotide sequence ID" value="NC_012587.1"/>
</dbReference>
<dbReference type="RefSeq" id="YP_002825718.1">
    <property type="nucleotide sequence ID" value="NC_012587.1"/>
</dbReference>
<dbReference type="SMR" id="C3MAX2"/>
<dbReference type="STRING" id="394.NGR_c11830"/>
<dbReference type="KEGG" id="rhi:NGR_c11830"/>
<dbReference type="PATRIC" id="fig|394.7.peg.3999"/>
<dbReference type="eggNOG" id="COG0085">
    <property type="taxonomic scope" value="Bacteria"/>
</dbReference>
<dbReference type="HOGENOM" id="CLU_000524_4_0_5"/>
<dbReference type="OrthoDB" id="9803954at2"/>
<dbReference type="Proteomes" id="UP000001054">
    <property type="component" value="Chromosome"/>
</dbReference>
<dbReference type="GO" id="GO:0000428">
    <property type="term" value="C:DNA-directed RNA polymerase complex"/>
    <property type="evidence" value="ECO:0007669"/>
    <property type="project" value="UniProtKB-KW"/>
</dbReference>
<dbReference type="GO" id="GO:0003677">
    <property type="term" value="F:DNA binding"/>
    <property type="evidence" value="ECO:0007669"/>
    <property type="project" value="UniProtKB-UniRule"/>
</dbReference>
<dbReference type="GO" id="GO:0003899">
    <property type="term" value="F:DNA-directed RNA polymerase activity"/>
    <property type="evidence" value="ECO:0007669"/>
    <property type="project" value="UniProtKB-UniRule"/>
</dbReference>
<dbReference type="GO" id="GO:0032549">
    <property type="term" value="F:ribonucleoside binding"/>
    <property type="evidence" value="ECO:0007669"/>
    <property type="project" value="InterPro"/>
</dbReference>
<dbReference type="GO" id="GO:0006351">
    <property type="term" value="P:DNA-templated transcription"/>
    <property type="evidence" value="ECO:0007669"/>
    <property type="project" value="UniProtKB-UniRule"/>
</dbReference>
<dbReference type="CDD" id="cd00653">
    <property type="entry name" value="RNA_pol_B_RPB2"/>
    <property type="match status" value="1"/>
</dbReference>
<dbReference type="FunFam" id="2.40.50.100:FF:000006">
    <property type="entry name" value="DNA-directed RNA polymerase subunit beta"/>
    <property type="match status" value="1"/>
</dbReference>
<dbReference type="FunFam" id="3.90.1800.10:FF:000001">
    <property type="entry name" value="DNA-directed RNA polymerase subunit beta"/>
    <property type="match status" value="1"/>
</dbReference>
<dbReference type="Gene3D" id="2.40.50.100">
    <property type="match status" value="1"/>
</dbReference>
<dbReference type="Gene3D" id="2.40.50.150">
    <property type="match status" value="1"/>
</dbReference>
<dbReference type="Gene3D" id="3.90.1100.10">
    <property type="match status" value="2"/>
</dbReference>
<dbReference type="Gene3D" id="2.30.150.10">
    <property type="entry name" value="DNA-directed RNA polymerase, beta subunit, external 1 domain"/>
    <property type="match status" value="1"/>
</dbReference>
<dbReference type="Gene3D" id="2.40.270.10">
    <property type="entry name" value="DNA-directed RNA polymerase, subunit 2, domain 6"/>
    <property type="match status" value="2"/>
</dbReference>
<dbReference type="Gene3D" id="3.90.1800.10">
    <property type="entry name" value="RNA polymerase alpha subunit dimerisation domain"/>
    <property type="match status" value="1"/>
</dbReference>
<dbReference type="Gene3D" id="3.90.1110.10">
    <property type="entry name" value="RNA polymerase Rpb2, domain 2"/>
    <property type="match status" value="2"/>
</dbReference>
<dbReference type="HAMAP" id="MF_01321">
    <property type="entry name" value="RNApol_bact_RpoB"/>
    <property type="match status" value="1"/>
</dbReference>
<dbReference type="InterPro" id="IPR042107">
    <property type="entry name" value="DNA-dir_RNA_pol_bsu_ext_1_sf"/>
</dbReference>
<dbReference type="InterPro" id="IPR019462">
    <property type="entry name" value="DNA-dir_RNA_pol_bsu_external_1"/>
</dbReference>
<dbReference type="InterPro" id="IPR015712">
    <property type="entry name" value="DNA-dir_RNA_pol_su2"/>
</dbReference>
<dbReference type="InterPro" id="IPR007120">
    <property type="entry name" value="DNA-dir_RNAP_su2_dom"/>
</dbReference>
<dbReference type="InterPro" id="IPR037033">
    <property type="entry name" value="DNA-dir_RNAP_su2_hyb_sf"/>
</dbReference>
<dbReference type="InterPro" id="IPR010243">
    <property type="entry name" value="RNA_pol_bsu_bac"/>
</dbReference>
<dbReference type="InterPro" id="IPR007121">
    <property type="entry name" value="RNA_pol_bsu_CS"/>
</dbReference>
<dbReference type="InterPro" id="IPR007644">
    <property type="entry name" value="RNA_pol_bsu_protrusion"/>
</dbReference>
<dbReference type="InterPro" id="IPR007642">
    <property type="entry name" value="RNA_pol_Rpb2_2"/>
</dbReference>
<dbReference type="InterPro" id="IPR037034">
    <property type="entry name" value="RNA_pol_Rpb2_2_sf"/>
</dbReference>
<dbReference type="InterPro" id="IPR007645">
    <property type="entry name" value="RNA_pol_Rpb2_3"/>
</dbReference>
<dbReference type="InterPro" id="IPR007641">
    <property type="entry name" value="RNA_pol_Rpb2_7"/>
</dbReference>
<dbReference type="InterPro" id="IPR014724">
    <property type="entry name" value="RNA_pol_RPB2_OB-fold"/>
</dbReference>
<dbReference type="NCBIfam" id="NF001616">
    <property type="entry name" value="PRK00405.1"/>
    <property type="match status" value="1"/>
</dbReference>
<dbReference type="NCBIfam" id="TIGR02013">
    <property type="entry name" value="rpoB"/>
    <property type="match status" value="1"/>
</dbReference>
<dbReference type="PANTHER" id="PTHR20856">
    <property type="entry name" value="DNA-DIRECTED RNA POLYMERASE I SUBUNIT 2"/>
    <property type="match status" value="1"/>
</dbReference>
<dbReference type="Pfam" id="PF04563">
    <property type="entry name" value="RNA_pol_Rpb2_1"/>
    <property type="match status" value="1"/>
</dbReference>
<dbReference type="Pfam" id="PF04561">
    <property type="entry name" value="RNA_pol_Rpb2_2"/>
    <property type="match status" value="2"/>
</dbReference>
<dbReference type="Pfam" id="PF04565">
    <property type="entry name" value="RNA_pol_Rpb2_3"/>
    <property type="match status" value="1"/>
</dbReference>
<dbReference type="Pfam" id="PF10385">
    <property type="entry name" value="RNA_pol_Rpb2_45"/>
    <property type="match status" value="1"/>
</dbReference>
<dbReference type="Pfam" id="PF00562">
    <property type="entry name" value="RNA_pol_Rpb2_6"/>
    <property type="match status" value="1"/>
</dbReference>
<dbReference type="Pfam" id="PF04560">
    <property type="entry name" value="RNA_pol_Rpb2_7"/>
    <property type="match status" value="1"/>
</dbReference>
<dbReference type="SUPFAM" id="SSF64484">
    <property type="entry name" value="beta and beta-prime subunits of DNA dependent RNA-polymerase"/>
    <property type="match status" value="1"/>
</dbReference>
<dbReference type="PROSITE" id="PS01166">
    <property type="entry name" value="RNA_POL_BETA"/>
    <property type="match status" value="1"/>
</dbReference>
<reference key="1">
    <citation type="journal article" date="2009" name="Appl. Environ. Microbiol.">
        <title>Rhizobium sp. strain NGR234 possesses a remarkable number of secretion systems.</title>
        <authorList>
            <person name="Schmeisser C."/>
            <person name="Liesegang H."/>
            <person name="Krysciak D."/>
            <person name="Bakkou N."/>
            <person name="Le Quere A."/>
            <person name="Wollherr A."/>
            <person name="Heinemeyer I."/>
            <person name="Morgenstern B."/>
            <person name="Pommerening-Roeser A."/>
            <person name="Flores M."/>
            <person name="Palacios R."/>
            <person name="Brenner S."/>
            <person name="Gottschalk G."/>
            <person name="Schmitz R.A."/>
            <person name="Broughton W.J."/>
            <person name="Perret X."/>
            <person name="Strittmatter A.W."/>
            <person name="Streit W.R."/>
        </authorList>
    </citation>
    <scope>NUCLEOTIDE SEQUENCE [LARGE SCALE GENOMIC DNA]</scope>
    <source>
        <strain>NBRC 101917 / NGR234</strain>
    </source>
</reference>
<name>RPOB_SINFN</name>
<sequence>MAQTLSFNGRRRVRKFFGKIPEVAEMPNLIEVQKASYDQFLMVEEPAGGRPDEGLQAVFKSVFPIKDFSGASMLEFVSYEFEPPKFDVEECRQRDLTYAAPLKVTLRLIVFDIDEDTGAKSIKDIKEQNVYMGDMPLMTDNGTFIVNGTERVIVSQMHRSPGVFFDHDKGKSHSSGKLLFAARVIPYRGSWLDIEFDAKDIVHARIDRRRKIPVTSLLMALGMDGEEILSTFYTQSLYQRDGDGWRVPFQPDALKGQKAIAEMIDADTGEVVVEAGKKLTPRLLRQLQEKGLKALKSTDDELYGNYLAEDVVNYETGEIYLEAGDEIDEKTLPVILSAGFDEIPVLDIDHINVGAYIRNTLAADKNENRQDALFDIYRVMRPGEPPTMDSAEAMFNALFFDAERYDLSAVGRVKMNMRLDLDVPDTVRTLRKEDILAVVKMLVELRDGKGEIDDIDNLGNRRVRSVGELMENQYRLGLLRMERAIKERMSSIEIDTVMPQDLINAKPAAAAVREFFGSSQLSRFMDQVNPLSEITHKRRLSALGPGGLTRERAGFEVRDVHPTHYGRICPIETPEGPNIGLINSLATFARVNKYGFIESPYRKIVDGNVTSDVVYLSAMEDAKYHVAQANSVLNDDGSFAEEFVVCRHAGEVMLAPRDNINLMDVSPKQLVSVAAALIPFLENDDANRALMGSNMQRQAVPLLRAEAPFVGTGMESVVARDSGAAIAARRGGVVDQVDATRIVIRATEDLDPSKSGVDIYRLQKFQRSNQNTCVNQRPLVTVGDLVNKGDIIADGPSTDLGDLALGRNALVAFMPWNGYNYEDSILLSERIVRDDVFTSIHIEEFEVMARDTKLGPEEITRDIPNVSEEALKNLDEAGIVYIGAEVQPGDILVGKITPKGESPMTPEEKLLRAIFGEKASDVRDTSMRMPPGTFGTIVEVRVFNRHGVEKDERAMAIEREEIERLAKDRDDEQAILDRNVYARLIDMLRGHVAVAGPKGFKKGTELSNAVISEYPRSQWWMFAVEDEKAQGEIEALRAQYDESKSRLEQRFMDKVEKVQRGDEMPPGVMKMVKVFVAVKRKIQPGDKMAGRHGNKGVVSRIVPIEDMPFLEDGTHVDVVLNPLGVPSRMNVGQILETHLGWACAGMGKKIGAMLDAYHESGDIKPLRTTIDDVIGSGPKGEPIKQYDDESIVRLAEQTRRGVSIATPVFDGAVEADVNEMLEKAGLKVTGQSTLYDGRTGDAFDRQVTVGYIYMLKLNHLVDDKIHARSIGPYSLVTQQPLGGKAQFGGQRFGEMEVWALEAYGAAYTLQEMLTVKSDDVAGRTKVYEAIVRGDDTFEAGIPESFNVLVKEMRSLGLSVELENSKVDDLGTTAQLPDAAE</sequence>
<accession>C3MAX2</accession>
<feature type="chain" id="PRO_1000165816" description="DNA-directed RNA polymerase subunit beta">
    <location>
        <begin position="1"/>
        <end position="1380"/>
    </location>
</feature>
<proteinExistence type="inferred from homology"/>
<protein>
    <recommendedName>
        <fullName evidence="1">DNA-directed RNA polymerase subunit beta</fullName>
        <shortName evidence="1">RNAP subunit beta</shortName>
        <ecNumber evidence="1">2.7.7.6</ecNumber>
    </recommendedName>
    <alternativeName>
        <fullName evidence="1">RNA polymerase subunit beta</fullName>
    </alternativeName>
    <alternativeName>
        <fullName evidence="1">Transcriptase subunit beta</fullName>
    </alternativeName>
</protein>
<evidence type="ECO:0000255" key="1">
    <source>
        <dbReference type="HAMAP-Rule" id="MF_01321"/>
    </source>
</evidence>